<sequence>MQTIHIGVLSASDRASKGVYEDLSGKAIQEVLSEYLLNPLEFHYEIVADERDLIEKSLIKMCDEYQCDLVVTTGGTGPALRDITPEATKKVCQKMLPGFGELMRMTSLKYVPTAILSRQSAGIRNKSLIINLPGKPKSIRECLEAVFPAIPYCVDLILGNYMQVNEKNIQAFRPKQ</sequence>
<reference key="1">
    <citation type="journal article" date="1999" name="Nature">
        <title>Genomic sequence comparison of two unrelated isolates of the human gastric pathogen Helicobacter pylori.</title>
        <authorList>
            <person name="Alm R.A."/>
            <person name="Ling L.-S.L."/>
            <person name="Moir D.T."/>
            <person name="King B.L."/>
            <person name="Brown E.D."/>
            <person name="Doig P.C."/>
            <person name="Smith D.R."/>
            <person name="Noonan B."/>
            <person name="Guild B.C."/>
            <person name="deJonge B.L."/>
            <person name="Carmel G."/>
            <person name="Tummino P.J."/>
            <person name="Caruso A."/>
            <person name="Uria-Nickelsen M."/>
            <person name="Mills D.M."/>
            <person name="Ives C."/>
            <person name="Gibson R."/>
            <person name="Merberg D."/>
            <person name="Mills S.D."/>
            <person name="Jiang Q."/>
            <person name="Taylor D.E."/>
            <person name="Vovis G.F."/>
            <person name="Trust T.J."/>
        </authorList>
    </citation>
    <scope>NUCLEOTIDE SEQUENCE [LARGE SCALE GENOMIC DNA]</scope>
    <source>
        <strain>J99 / ATCC 700824</strain>
    </source>
</reference>
<organism>
    <name type="scientific">Helicobacter pylori (strain J99 / ATCC 700824)</name>
    <name type="common">Campylobacter pylori J99</name>
    <dbReference type="NCBI Taxonomy" id="85963"/>
    <lineage>
        <taxon>Bacteria</taxon>
        <taxon>Pseudomonadati</taxon>
        <taxon>Campylobacterota</taxon>
        <taxon>Epsilonproteobacteria</taxon>
        <taxon>Campylobacterales</taxon>
        <taxon>Helicobacteraceae</taxon>
        <taxon>Helicobacter</taxon>
    </lineage>
</organism>
<name>MOG_HELPJ</name>
<evidence type="ECO:0000250" key="1"/>
<evidence type="ECO:0000305" key="2"/>
<evidence type="ECO:0007829" key="3">
    <source>
        <dbReference type="PDB" id="4XCW"/>
    </source>
</evidence>
<feature type="chain" id="PRO_0000170986" description="Molybdopterin adenylyltransferase">
    <location>
        <begin position="1"/>
        <end position="176"/>
    </location>
</feature>
<feature type="strand" evidence="3">
    <location>
        <begin position="4"/>
        <end position="11"/>
    </location>
</feature>
<feature type="strand" evidence="3">
    <location>
        <begin position="14"/>
        <end position="16"/>
    </location>
</feature>
<feature type="helix" evidence="3">
    <location>
        <begin position="23"/>
        <end position="35"/>
    </location>
</feature>
<feature type="strand" evidence="3">
    <location>
        <begin position="40"/>
        <end position="47"/>
    </location>
</feature>
<feature type="helix" evidence="3">
    <location>
        <begin position="51"/>
        <end position="63"/>
    </location>
</feature>
<feature type="strand" evidence="3">
    <location>
        <begin position="68"/>
        <end position="74"/>
    </location>
</feature>
<feature type="strand" evidence="3">
    <location>
        <begin position="77"/>
        <end position="79"/>
    </location>
</feature>
<feature type="helix" evidence="3">
    <location>
        <begin position="84"/>
        <end position="91"/>
    </location>
</feature>
<feature type="strand" evidence="3">
    <location>
        <begin position="93"/>
        <end position="95"/>
    </location>
</feature>
<feature type="helix" evidence="3">
    <location>
        <begin position="97"/>
        <end position="108"/>
    </location>
</feature>
<feature type="helix" evidence="3">
    <location>
        <begin position="112"/>
        <end position="116"/>
    </location>
</feature>
<feature type="strand" evidence="3">
    <location>
        <begin position="121"/>
        <end position="124"/>
    </location>
</feature>
<feature type="strand" evidence="3">
    <location>
        <begin position="127"/>
        <end position="132"/>
    </location>
</feature>
<feature type="helix" evidence="3">
    <location>
        <begin position="136"/>
        <end position="146"/>
    </location>
</feature>
<feature type="helix" evidence="3">
    <location>
        <begin position="147"/>
        <end position="149"/>
    </location>
</feature>
<feature type="helix" evidence="3">
    <location>
        <begin position="150"/>
        <end position="156"/>
    </location>
</feature>
<feature type="turn" evidence="3">
    <location>
        <begin position="166"/>
        <end position="168"/>
    </location>
</feature>
<accession>Q9ZL45</accession>
<keyword id="KW-0002">3D-structure</keyword>
<keyword id="KW-0067">ATP-binding</keyword>
<keyword id="KW-0501">Molybdenum cofactor biosynthesis</keyword>
<keyword id="KW-0547">Nucleotide-binding</keyword>
<keyword id="KW-0808">Transferase</keyword>
<protein>
    <recommendedName>
        <fullName>Molybdopterin adenylyltransferase</fullName>
        <shortName>MPT adenylyltransferase</shortName>
        <ecNumber>2.7.7.75</ecNumber>
    </recommendedName>
</protein>
<proteinExistence type="evidence at protein level"/>
<dbReference type="EC" id="2.7.7.75"/>
<dbReference type="EMBL" id="AE001439">
    <property type="protein sequence ID" value="AAD06321.1"/>
    <property type="molecule type" value="Genomic_DNA"/>
</dbReference>
<dbReference type="PIR" id="F71893">
    <property type="entry name" value="F71893"/>
</dbReference>
<dbReference type="RefSeq" id="WP_001193339.1">
    <property type="nucleotide sequence ID" value="NC_000921.1"/>
</dbReference>
<dbReference type="PDB" id="4XCW">
    <property type="method" value="X-ray"/>
    <property type="resolution" value="1.80 A"/>
    <property type="chains" value="A/B/C/D/E/F=1-176"/>
</dbReference>
<dbReference type="PDBsum" id="4XCW"/>
<dbReference type="SMR" id="Q9ZL45"/>
<dbReference type="KEGG" id="hpj:jhp_0735"/>
<dbReference type="eggNOG" id="COG0521">
    <property type="taxonomic scope" value="Bacteria"/>
</dbReference>
<dbReference type="UniPathway" id="UPA00344"/>
<dbReference type="EvolutionaryTrace" id="Q9ZL45"/>
<dbReference type="Proteomes" id="UP000000804">
    <property type="component" value="Chromosome"/>
</dbReference>
<dbReference type="GO" id="GO:0005524">
    <property type="term" value="F:ATP binding"/>
    <property type="evidence" value="ECO:0007669"/>
    <property type="project" value="UniProtKB-KW"/>
</dbReference>
<dbReference type="GO" id="GO:0061598">
    <property type="term" value="F:molybdopterin adenylyltransferase activity"/>
    <property type="evidence" value="ECO:0007669"/>
    <property type="project" value="UniProtKB-EC"/>
</dbReference>
<dbReference type="GO" id="GO:0006777">
    <property type="term" value="P:Mo-molybdopterin cofactor biosynthetic process"/>
    <property type="evidence" value="ECO:0007669"/>
    <property type="project" value="UniProtKB-KW"/>
</dbReference>
<dbReference type="CDD" id="cd00886">
    <property type="entry name" value="MogA_MoaB"/>
    <property type="match status" value="1"/>
</dbReference>
<dbReference type="FunFam" id="3.40.980.10:FF:000005">
    <property type="entry name" value="Molybdopterin biosynthesis mog protein"/>
    <property type="match status" value="1"/>
</dbReference>
<dbReference type="Gene3D" id="3.40.980.10">
    <property type="entry name" value="MoaB/Mog-like domain"/>
    <property type="match status" value="1"/>
</dbReference>
<dbReference type="InterPro" id="IPR036425">
    <property type="entry name" value="MoaB/Mog-like_dom_sf"/>
</dbReference>
<dbReference type="InterPro" id="IPR001453">
    <property type="entry name" value="MoaB/Mog_dom"/>
</dbReference>
<dbReference type="InterPro" id="IPR008284">
    <property type="entry name" value="MoCF_biosynth_CS"/>
</dbReference>
<dbReference type="InterPro" id="IPR051920">
    <property type="entry name" value="MPT_Adenylyltrnsfr/MoaC-Rel"/>
</dbReference>
<dbReference type="NCBIfam" id="TIGR00177">
    <property type="entry name" value="molyb_syn"/>
    <property type="match status" value="1"/>
</dbReference>
<dbReference type="NCBIfam" id="NF006932">
    <property type="entry name" value="PRK09417.1"/>
    <property type="match status" value="1"/>
</dbReference>
<dbReference type="PANTHER" id="PTHR43764">
    <property type="entry name" value="MOLYBDENUM COFACTOR BIOSYNTHESIS"/>
    <property type="match status" value="1"/>
</dbReference>
<dbReference type="PANTHER" id="PTHR43764:SF1">
    <property type="entry name" value="MOLYBDOPTERIN MOLYBDOTRANSFERASE"/>
    <property type="match status" value="1"/>
</dbReference>
<dbReference type="Pfam" id="PF00994">
    <property type="entry name" value="MoCF_biosynth"/>
    <property type="match status" value="1"/>
</dbReference>
<dbReference type="SMART" id="SM00852">
    <property type="entry name" value="MoCF_biosynth"/>
    <property type="match status" value="1"/>
</dbReference>
<dbReference type="SUPFAM" id="SSF53218">
    <property type="entry name" value="Molybdenum cofactor biosynthesis proteins"/>
    <property type="match status" value="1"/>
</dbReference>
<dbReference type="PROSITE" id="PS01078">
    <property type="entry name" value="MOCF_BIOSYNTHESIS_1"/>
    <property type="match status" value="1"/>
</dbReference>
<gene>
    <name type="primary">mog</name>
    <name type="synonym">mogA</name>
    <name type="ordered locus">jhp_0735</name>
</gene>
<comment type="function">
    <text evidence="1">Catalyzes the adenylation of molybdopterin as part of the biosynthesis of the molybdenum-cofactor.</text>
</comment>
<comment type="catalytic activity">
    <reaction>
        <text>molybdopterin + ATP + H(+) = adenylyl-molybdopterin + diphosphate</text>
        <dbReference type="Rhea" id="RHEA:31331"/>
        <dbReference type="ChEBI" id="CHEBI:15378"/>
        <dbReference type="ChEBI" id="CHEBI:30616"/>
        <dbReference type="ChEBI" id="CHEBI:33019"/>
        <dbReference type="ChEBI" id="CHEBI:58698"/>
        <dbReference type="ChEBI" id="CHEBI:62727"/>
        <dbReference type="EC" id="2.7.7.75"/>
    </reaction>
</comment>
<comment type="pathway">
    <text>Cofactor biosynthesis; molybdopterin biosynthesis.</text>
</comment>
<comment type="similarity">
    <text evidence="2">Belongs to the MoaB/Mog family.</text>
</comment>